<protein>
    <recommendedName>
        <fullName>F-box only protein 30</fullName>
    </recommendedName>
</protein>
<organism>
    <name type="scientific">Rattus norvegicus</name>
    <name type="common">Rat</name>
    <dbReference type="NCBI Taxonomy" id="10116"/>
    <lineage>
        <taxon>Eukaryota</taxon>
        <taxon>Metazoa</taxon>
        <taxon>Chordata</taxon>
        <taxon>Craniata</taxon>
        <taxon>Vertebrata</taxon>
        <taxon>Euteleostomi</taxon>
        <taxon>Mammalia</taxon>
        <taxon>Eutheria</taxon>
        <taxon>Euarchontoglires</taxon>
        <taxon>Glires</taxon>
        <taxon>Rodentia</taxon>
        <taxon>Myomorpha</taxon>
        <taxon>Muroidea</taxon>
        <taxon>Muridae</taxon>
        <taxon>Murinae</taxon>
        <taxon>Rattus</taxon>
    </lineage>
</organism>
<sequence length="742" mass="82011">MEEEVQQHSHCVNCVSRRCMTRPEPGVSCDLIGCPLVCGAVFHSCKADEHRLLCPFERVPCLNSNFGCPFTLARNKVAEHLEMCPASVVCCTMEWNRWPVSYSDRKSYESLSRDADEVSQLDMALALQDQRMLLESLKVATMMSKATGKISKPREQISVNSSVQEVPRANGLVSADEESYGALYEATVETTRSLAAALDILNSATRDIGMLNTSLQGTTNEMDEESNRESSQDRNAKDQDHLDEGEIGAVGGIDYTGTSQNAQAEQNGSSDLLCNLNTSSYDTSALCNGFPLEKMCTQVKDQDQNFHGDSTESNITNGDCVEADGTSEPPSSLLVAEQLKEGSALPDSTYQHILMPDEDDDEDLCWKKDLGDSKDVNGSPLSHATSFKFLSNSWYIPKEDKAVDTSDLEVAEDPMGLQGIDLITAALLFCLGDSPGGRGISDSRMVDVYHVDFGTQTFSLPSAILATNTMVGEIASASACDHANPQLSNPSPFQTLGLDLVLECVARYQPKQRSMFTFVCGQLFRRKEFSSHFKNVHGDIHAGLNGWMEQRCPLAYYGCTYSQRRFCPSTQGAKIIHDRHLRSFGVQPCVSTALEEPSRNCVLGLRSDHLSSLPFEVLQHIAGFLDGFSLCQLACVSRLMRDICGSLLQSRGMVILQWGKKKYPEGNSSWQIKEKVWRFSTAFCSVNDWKFADILSMADHLKKCSYNVIEKREEAIPLPCMCVTRELTKEGRSLRSVLKPVL</sequence>
<gene>
    <name type="primary">Fbxo30</name>
</gene>
<name>FBX30_RAT</name>
<accession>Q5XI67</accession>
<evidence type="ECO:0000250" key="1"/>
<evidence type="ECO:0000255" key="2">
    <source>
        <dbReference type="PROSITE-ProRule" id="PRU00080"/>
    </source>
</evidence>
<evidence type="ECO:0000255" key="3">
    <source>
        <dbReference type="PROSITE-ProRule" id="PRU00207"/>
    </source>
</evidence>
<evidence type="ECO:0000256" key="4">
    <source>
        <dbReference type="SAM" id="MobiDB-lite"/>
    </source>
</evidence>
<evidence type="ECO:0007744" key="5">
    <source>
    </source>
</evidence>
<keyword id="KW-0479">Metal-binding</keyword>
<keyword id="KW-0597">Phosphoprotein</keyword>
<keyword id="KW-1185">Reference proteome</keyword>
<keyword id="KW-0832">Ubl conjugation</keyword>
<keyword id="KW-0833">Ubl conjugation pathway</keyword>
<keyword id="KW-0862">Zinc</keyword>
<keyword id="KW-0863">Zinc-finger</keyword>
<dbReference type="EMBL" id="BC083823">
    <property type="protein sequence ID" value="AAH83823.1"/>
    <property type="molecule type" value="mRNA"/>
</dbReference>
<dbReference type="RefSeq" id="NP_001007691.1">
    <property type="nucleotide sequence ID" value="NM_001007690.1"/>
</dbReference>
<dbReference type="RefSeq" id="XP_006227702.1">
    <property type="nucleotide sequence ID" value="XM_006227640.5"/>
</dbReference>
<dbReference type="SMR" id="Q5XI67"/>
<dbReference type="BioGRID" id="258945">
    <property type="interactions" value="1"/>
</dbReference>
<dbReference type="FunCoup" id="Q5XI67">
    <property type="interactions" value="1416"/>
</dbReference>
<dbReference type="STRING" id="10116.ENSRNOP00000019918"/>
<dbReference type="iPTMnet" id="Q5XI67"/>
<dbReference type="PhosphoSitePlus" id="Q5XI67"/>
<dbReference type="jPOST" id="Q5XI67"/>
<dbReference type="PaxDb" id="10116-ENSRNOP00000019918"/>
<dbReference type="Ensembl" id="ENSRNOT00000019918.6">
    <property type="protein sequence ID" value="ENSRNOP00000019918.3"/>
    <property type="gene ID" value="ENSRNOG00000014852.6"/>
</dbReference>
<dbReference type="GeneID" id="308283"/>
<dbReference type="KEGG" id="rno:308283"/>
<dbReference type="UCSC" id="RGD:1359367">
    <property type="organism name" value="rat"/>
</dbReference>
<dbReference type="AGR" id="RGD:1359367"/>
<dbReference type="CTD" id="84085"/>
<dbReference type="RGD" id="1359367">
    <property type="gene designation" value="Fbxo30"/>
</dbReference>
<dbReference type="eggNOG" id="ENOG502QTD9">
    <property type="taxonomic scope" value="Eukaryota"/>
</dbReference>
<dbReference type="GeneTree" id="ENSGT00950000183204"/>
<dbReference type="HOGENOM" id="CLU_013357_0_0_1"/>
<dbReference type="InParanoid" id="Q5XI67"/>
<dbReference type="OMA" id="SSWQVKE"/>
<dbReference type="OrthoDB" id="5918172at2759"/>
<dbReference type="PhylomeDB" id="Q5XI67"/>
<dbReference type="TreeFam" id="TF343227"/>
<dbReference type="Reactome" id="R-RNO-8951664">
    <property type="pathway name" value="Neddylation"/>
</dbReference>
<dbReference type="Reactome" id="R-RNO-983168">
    <property type="pathway name" value="Antigen processing: Ubiquitination &amp; Proteasome degradation"/>
</dbReference>
<dbReference type="UniPathway" id="UPA00143"/>
<dbReference type="PRO" id="PR:Q5XI67"/>
<dbReference type="Proteomes" id="UP000002494">
    <property type="component" value="Chromosome 1"/>
</dbReference>
<dbReference type="Bgee" id="ENSRNOG00000014852">
    <property type="expression patterns" value="Expressed in testis and 19 other cell types or tissues"/>
</dbReference>
<dbReference type="GO" id="GO:0061630">
    <property type="term" value="F:ubiquitin protein ligase activity"/>
    <property type="evidence" value="ECO:0007669"/>
    <property type="project" value="InterPro"/>
</dbReference>
<dbReference type="GO" id="GO:0008270">
    <property type="term" value="F:zinc ion binding"/>
    <property type="evidence" value="ECO:0007669"/>
    <property type="project" value="UniProtKB-KW"/>
</dbReference>
<dbReference type="GO" id="GO:0006325">
    <property type="term" value="P:chromatin organization"/>
    <property type="evidence" value="ECO:0000266"/>
    <property type="project" value="RGD"/>
</dbReference>
<dbReference type="GO" id="GO:0030261">
    <property type="term" value="P:chromosome condensation"/>
    <property type="evidence" value="ECO:0000266"/>
    <property type="project" value="RGD"/>
</dbReference>
<dbReference type="GO" id="GO:0007059">
    <property type="term" value="P:chromosome segregation"/>
    <property type="evidence" value="ECO:0000266"/>
    <property type="project" value="RGD"/>
</dbReference>
<dbReference type="GO" id="GO:0010467">
    <property type="term" value="P:gene expression"/>
    <property type="evidence" value="ECO:0000266"/>
    <property type="project" value="RGD"/>
</dbReference>
<dbReference type="GO" id="GO:0016567">
    <property type="term" value="P:protein ubiquitination"/>
    <property type="evidence" value="ECO:0007669"/>
    <property type="project" value="UniProtKB-UniPathway"/>
</dbReference>
<dbReference type="CDD" id="cd22174">
    <property type="entry name" value="F-box_FBXO30"/>
    <property type="match status" value="1"/>
</dbReference>
<dbReference type="FunFam" id="3.30.40.150:FF:000001">
    <property type="entry name" value="F-box only protein 30"/>
    <property type="match status" value="1"/>
</dbReference>
<dbReference type="Gene3D" id="1.20.1280.50">
    <property type="match status" value="1"/>
</dbReference>
<dbReference type="Gene3D" id="3.30.40.150">
    <property type="entry name" value="TRAF-like zinc-finger, N-terminal subdomain"/>
    <property type="match status" value="1"/>
</dbReference>
<dbReference type="Gene3D" id="3.30.40.10">
    <property type="entry name" value="Zinc/RING finger domain, C3HC4 (zinc finger)"/>
    <property type="match status" value="1"/>
</dbReference>
<dbReference type="InterPro" id="IPR036047">
    <property type="entry name" value="F-box-like_dom_sf"/>
</dbReference>
<dbReference type="InterPro" id="IPR001810">
    <property type="entry name" value="F-box_dom"/>
</dbReference>
<dbReference type="InterPro" id="IPR031890">
    <property type="entry name" value="Fbxo30/Fbxo40"/>
</dbReference>
<dbReference type="InterPro" id="IPR013083">
    <property type="entry name" value="Znf_RING/FYVE/PHD"/>
</dbReference>
<dbReference type="InterPro" id="IPR001293">
    <property type="entry name" value="Znf_TRAF"/>
</dbReference>
<dbReference type="InterPro" id="IPR043013">
    <property type="entry name" value="Znf_TRAF_N"/>
</dbReference>
<dbReference type="PANTHER" id="PTHR15933:SF13">
    <property type="entry name" value="F-BOX ONLY PROTEIN 30"/>
    <property type="match status" value="1"/>
</dbReference>
<dbReference type="PANTHER" id="PTHR15933">
    <property type="entry name" value="PROTEIN CBG16327"/>
    <property type="match status" value="1"/>
</dbReference>
<dbReference type="Pfam" id="PF15966">
    <property type="entry name" value="F-box_4"/>
    <property type="match status" value="1"/>
</dbReference>
<dbReference type="Pfam" id="PF15965">
    <property type="entry name" value="zf-TRAF_2"/>
    <property type="match status" value="1"/>
</dbReference>
<dbReference type="SUPFAM" id="SSF81383">
    <property type="entry name" value="F-box domain"/>
    <property type="match status" value="1"/>
</dbReference>
<dbReference type="SUPFAM" id="SSF49599">
    <property type="entry name" value="TRAF domain-like"/>
    <property type="match status" value="1"/>
</dbReference>
<dbReference type="PROSITE" id="PS50181">
    <property type="entry name" value="FBOX"/>
    <property type="match status" value="1"/>
</dbReference>
<dbReference type="PROSITE" id="PS50145">
    <property type="entry name" value="ZF_TRAF"/>
    <property type="match status" value="1"/>
</dbReference>
<proteinExistence type="evidence at protein level"/>
<reference key="1">
    <citation type="journal article" date="2004" name="Genome Res.">
        <title>The status, quality, and expansion of the NIH full-length cDNA project: the Mammalian Gene Collection (MGC).</title>
        <authorList>
            <consortium name="The MGC Project Team"/>
        </authorList>
    </citation>
    <scope>NUCLEOTIDE SEQUENCE [LARGE SCALE MRNA]</scope>
    <source>
        <tissue>Testis</tissue>
    </source>
</reference>
<reference key="2">
    <citation type="journal article" date="2012" name="Nat. Commun.">
        <title>Quantitative maps of protein phosphorylation sites across 14 different rat organs and tissues.</title>
        <authorList>
            <person name="Lundby A."/>
            <person name="Secher A."/>
            <person name="Lage K."/>
            <person name="Nordsborg N.B."/>
            <person name="Dmytriyev A."/>
            <person name="Lundby C."/>
            <person name="Olsen J.V."/>
        </authorList>
    </citation>
    <scope>PHOSPHORYLATION [LARGE SCALE ANALYSIS] AT SER-379</scope>
    <scope>IDENTIFICATION BY MASS SPECTROMETRY [LARGE SCALE ANALYSIS]</scope>
</reference>
<feature type="chain" id="PRO_0000119920" description="F-box only protein 30">
    <location>
        <begin position="1"/>
        <end position="742"/>
    </location>
</feature>
<feature type="domain" description="F-box" evidence="2">
    <location>
        <begin position="607"/>
        <end position="653"/>
    </location>
</feature>
<feature type="zinc finger region" description="TRAF-type" evidence="3">
    <location>
        <begin position="49"/>
        <end position="108"/>
    </location>
</feature>
<feature type="region of interest" description="Disordered" evidence="4">
    <location>
        <begin position="214"/>
        <end position="242"/>
    </location>
</feature>
<feature type="compositionally biased region" description="Basic and acidic residues" evidence="4">
    <location>
        <begin position="225"/>
        <end position="242"/>
    </location>
</feature>
<feature type="modified residue" description="Phosphoserine" evidence="5">
    <location>
        <position position="379"/>
    </location>
</feature>
<comment type="function">
    <text evidence="1">Substrate-recognition component of the SCF (SKP1-CUL1-F-box protein)-type E3 ubiquitin ligase complex. Required for muscle atrophy following denervation.</text>
</comment>
<comment type="pathway">
    <text>Protein modification; protein ubiquitination.</text>
</comment>
<comment type="subunit">
    <text evidence="1">Part of a SCF (SKP1-cullin-F-box) protein ligase complex. Interacts with SKP1, CUL1 and RBX1/ROC1 (By similarity).</text>
</comment>
<comment type="PTM">
    <text evidence="1">Auto-ubiquitinated.</text>
</comment>
<comment type="PTM">
    <text evidence="1">May be neddylated. Neddylation may be required for E3 ligase activity (By similarity).</text>
</comment>